<name>ATPE_YERPB</name>
<proteinExistence type="inferred from homology"/>
<comment type="function">
    <text evidence="1">Produces ATP from ADP in the presence of a proton gradient across the membrane.</text>
</comment>
<comment type="subunit">
    <text evidence="1">F-type ATPases have 2 components, CF(1) - the catalytic core - and CF(0) - the membrane proton channel. CF(1) has five subunits: alpha(3), beta(3), gamma(1), delta(1), epsilon(1). CF(0) has three main subunits: a, b and c.</text>
</comment>
<comment type="subcellular location">
    <subcellularLocation>
        <location evidence="1">Cell inner membrane</location>
        <topology evidence="1">Peripheral membrane protein</topology>
    </subcellularLocation>
</comment>
<comment type="similarity">
    <text evidence="1">Belongs to the ATPase epsilon chain family.</text>
</comment>
<evidence type="ECO:0000255" key="1">
    <source>
        <dbReference type="HAMAP-Rule" id="MF_00530"/>
    </source>
</evidence>
<organism>
    <name type="scientific">Yersinia pseudotuberculosis serotype IB (strain PB1/+)</name>
    <dbReference type="NCBI Taxonomy" id="502801"/>
    <lineage>
        <taxon>Bacteria</taxon>
        <taxon>Pseudomonadati</taxon>
        <taxon>Pseudomonadota</taxon>
        <taxon>Gammaproteobacteria</taxon>
        <taxon>Enterobacterales</taxon>
        <taxon>Yersiniaceae</taxon>
        <taxon>Yersinia</taxon>
    </lineage>
</organism>
<gene>
    <name evidence="1" type="primary">atpC</name>
    <name type="ordered locus">YPTS_4181</name>
</gene>
<accession>B2K848</accession>
<dbReference type="EMBL" id="CP001048">
    <property type="protein sequence ID" value="ACC91124.1"/>
    <property type="molecule type" value="Genomic_DNA"/>
</dbReference>
<dbReference type="RefSeq" id="WP_002215546.1">
    <property type="nucleotide sequence ID" value="NZ_CP009780.1"/>
</dbReference>
<dbReference type="SMR" id="B2K848"/>
<dbReference type="KEGG" id="ypb:YPTS_4181"/>
<dbReference type="PATRIC" id="fig|502801.10.peg.3652"/>
<dbReference type="GO" id="GO:0005886">
    <property type="term" value="C:plasma membrane"/>
    <property type="evidence" value="ECO:0007669"/>
    <property type="project" value="UniProtKB-SubCell"/>
</dbReference>
<dbReference type="GO" id="GO:0045259">
    <property type="term" value="C:proton-transporting ATP synthase complex"/>
    <property type="evidence" value="ECO:0007669"/>
    <property type="project" value="UniProtKB-KW"/>
</dbReference>
<dbReference type="GO" id="GO:0005524">
    <property type="term" value="F:ATP binding"/>
    <property type="evidence" value="ECO:0007669"/>
    <property type="project" value="UniProtKB-UniRule"/>
</dbReference>
<dbReference type="GO" id="GO:0046933">
    <property type="term" value="F:proton-transporting ATP synthase activity, rotational mechanism"/>
    <property type="evidence" value="ECO:0007669"/>
    <property type="project" value="UniProtKB-UniRule"/>
</dbReference>
<dbReference type="CDD" id="cd12152">
    <property type="entry name" value="F1-ATPase_delta"/>
    <property type="match status" value="1"/>
</dbReference>
<dbReference type="FunFam" id="1.20.5.440:FF:000001">
    <property type="entry name" value="ATP synthase epsilon chain"/>
    <property type="match status" value="1"/>
</dbReference>
<dbReference type="FunFam" id="2.60.15.10:FF:000001">
    <property type="entry name" value="ATP synthase epsilon chain"/>
    <property type="match status" value="1"/>
</dbReference>
<dbReference type="Gene3D" id="1.20.5.440">
    <property type="entry name" value="ATP synthase delta/epsilon subunit, C-terminal domain"/>
    <property type="match status" value="1"/>
</dbReference>
<dbReference type="Gene3D" id="2.60.15.10">
    <property type="entry name" value="F0F1 ATP synthase delta/epsilon subunit, N-terminal"/>
    <property type="match status" value="1"/>
</dbReference>
<dbReference type="HAMAP" id="MF_00530">
    <property type="entry name" value="ATP_synth_epsil_bac"/>
    <property type="match status" value="1"/>
</dbReference>
<dbReference type="InterPro" id="IPR036794">
    <property type="entry name" value="ATP_F1_dsu/esu_C_sf"/>
</dbReference>
<dbReference type="InterPro" id="IPR001469">
    <property type="entry name" value="ATP_synth_F1_dsu/esu"/>
</dbReference>
<dbReference type="InterPro" id="IPR020546">
    <property type="entry name" value="ATP_synth_F1_dsu/esu_N"/>
</dbReference>
<dbReference type="InterPro" id="IPR020547">
    <property type="entry name" value="ATP_synth_F1_esu_C"/>
</dbReference>
<dbReference type="InterPro" id="IPR036771">
    <property type="entry name" value="ATPsynth_dsu/esu_N"/>
</dbReference>
<dbReference type="NCBIfam" id="TIGR01216">
    <property type="entry name" value="ATP_synt_epsi"/>
    <property type="match status" value="1"/>
</dbReference>
<dbReference type="NCBIfam" id="NF001847">
    <property type="entry name" value="PRK00571.1-4"/>
    <property type="match status" value="1"/>
</dbReference>
<dbReference type="PANTHER" id="PTHR13822">
    <property type="entry name" value="ATP SYNTHASE DELTA/EPSILON CHAIN"/>
    <property type="match status" value="1"/>
</dbReference>
<dbReference type="PANTHER" id="PTHR13822:SF10">
    <property type="entry name" value="ATP SYNTHASE EPSILON CHAIN, CHLOROPLASTIC"/>
    <property type="match status" value="1"/>
</dbReference>
<dbReference type="Pfam" id="PF00401">
    <property type="entry name" value="ATP-synt_DE"/>
    <property type="match status" value="1"/>
</dbReference>
<dbReference type="Pfam" id="PF02823">
    <property type="entry name" value="ATP-synt_DE_N"/>
    <property type="match status" value="1"/>
</dbReference>
<dbReference type="SUPFAM" id="SSF46604">
    <property type="entry name" value="Epsilon subunit of F1F0-ATP synthase C-terminal domain"/>
    <property type="match status" value="1"/>
</dbReference>
<dbReference type="SUPFAM" id="SSF51344">
    <property type="entry name" value="Epsilon subunit of F1F0-ATP synthase N-terminal domain"/>
    <property type="match status" value="1"/>
</dbReference>
<feature type="chain" id="PRO_1000127909" description="ATP synthase epsilon chain">
    <location>
        <begin position="1"/>
        <end position="140"/>
    </location>
</feature>
<keyword id="KW-0066">ATP synthesis</keyword>
<keyword id="KW-0997">Cell inner membrane</keyword>
<keyword id="KW-1003">Cell membrane</keyword>
<keyword id="KW-0139">CF(1)</keyword>
<keyword id="KW-0375">Hydrogen ion transport</keyword>
<keyword id="KW-0406">Ion transport</keyword>
<keyword id="KW-0472">Membrane</keyword>
<keyword id="KW-0813">Transport</keyword>
<sequence>MAAMTYHLDVVSAEKKMFSGVVQKIQVTGSEGELGIFPGHAPLLTAIKPGMIRIVKQFGEEEFIYLSGGILEVQPSVVIVLADTAIRGLDLDEARALESKRKAEAHINNSHGDVDYAQASAELAKAIAKLRVIELTKKAM</sequence>
<protein>
    <recommendedName>
        <fullName evidence="1">ATP synthase epsilon chain</fullName>
    </recommendedName>
    <alternativeName>
        <fullName evidence="1">ATP synthase F1 sector epsilon subunit</fullName>
    </alternativeName>
    <alternativeName>
        <fullName evidence="1">F-ATPase epsilon subunit</fullName>
    </alternativeName>
</protein>
<reference key="1">
    <citation type="submission" date="2008-04" db="EMBL/GenBank/DDBJ databases">
        <title>Complete sequence of Yersinia pseudotuberculosis PB1/+.</title>
        <authorList>
            <person name="Copeland A."/>
            <person name="Lucas S."/>
            <person name="Lapidus A."/>
            <person name="Glavina del Rio T."/>
            <person name="Dalin E."/>
            <person name="Tice H."/>
            <person name="Bruce D."/>
            <person name="Goodwin L."/>
            <person name="Pitluck S."/>
            <person name="Munk A.C."/>
            <person name="Brettin T."/>
            <person name="Detter J.C."/>
            <person name="Han C."/>
            <person name="Tapia R."/>
            <person name="Schmutz J."/>
            <person name="Larimer F."/>
            <person name="Land M."/>
            <person name="Hauser L."/>
            <person name="Challacombe J.F."/>
            <person name="Green L."/>
            <person name="Lindler L.E."/>
            <person name="Nikolich M.P."/>
            <person name="Richardson P."/>
        </authorList>
    </citation>
    <scope>NUCLEOTIDE SEQUENCE [LARGE SCALE GENOMIC DNA]</scope>
    <source>
        <strain>PB1/+</strain>
    </source>
</reference>